<comment type="function">
    <text evidence="4 7">Meiosis specific component of cohesin complex. The cohesin complex is required for the cohesion of sister chromatids after DNA replication. The cohesin complex apparently forms a large proteinaceous ring within which sister chromatids can be trapped. At anaphase, the complex is cleaved and dissociates from chromatin, allowing sister chromatids to segregate. The meiosis-specific cohesin complex probably replaces mitosis specific cohesin complex when it dissociates from chromatin during prophase I.</text>
</comment>
<comment type="subunit">
    <text evidence="1 4 6">Component of the meiosis-specific cohesin complex, which also contains the SMC1 (SMC1A or SMC1B) and SMC3 heterodimer. Such complex likely contains RAD21, or the meiosis-specific related protein REC8 (By similarity). Interacts with CCDC79/TERB1; recruiting cohesin to telomeres to develop structural rigidity.</text>
</comment>
<comment type="subcellular location">
    <subcellularLocation>
        <location evidence="2 5">Nucleus</location>
    </subcellularLocation>
    <subcellularLocation>
        <location evidence="5">Chromosome</location>
    </subcellularLocation>
    <subcellularLocation>
        <location evidence="5">Chromosome</location>
        <location evidence="5">Centromere</location>
    </subcellularLocation>
    <text>Associates with chromatin. In prophase I stage of meiosis, it is found along the axial elements of synaptonemal complexes. In late-pachytene-diplotene, the bulk of protein dissociates from the chromosome arms probably because of phosphorylation by PLK1, except at centromeres, where cohesin complexes remain. It however remains chromatin associated at the centromeres up to metaphase I. During anaphase I, it probably dissociates from centromeres, allowing chromosomes segregation.</text>
</comment>
<comment type="tissue specificity">
    <text>Testis specific.</text>
</comment>
<comment type="PTM">
    <text evidence="5">Phosphorylated.</text>
</comment>
<comment type="disruption phenotype">
    <text evidence="7">Deficient mice are sterile and their fetal oocytes are arrested at early prophase I leading to oocyte depletion at 1 week of age.</text>
</comment>
<comment type="similarity">
    <text evidence="8">Belongs to the SCC3 family.</text>
</comment>
<gene>
    <name type="primary">Stag3</name>
</gene>
<organism>
    <name type="scientific">Mus musculus</name>
    <name type="common">Mouse</name>
    <dbReference type="NCBI Taxonomy" id="10090"/>
    <lineage>
        <taxon>Eukaryota</taxon>
        <taxon>Metazoa</taxon>
        <taxon>Chordata</taxon>
        <taxon>Craniata</taxon>
        <taxon>Vertebrata</taxon>
        <taxon>Euteleostomi</taxon>
        <taxon>Mammalia</taxon>
        <taxon>Eutheria</taxon>
        <taxon>Euarchontoglires</taxon>
        <taxon>Glires</taxon>
        <taxon>Rodentia</taxon>
        <taxon>Myomorpha</taxon>
        <taxon>Muroidea</taxon>
        <taxon>Muridae</taxon>
        <taxon>Murinae</taxon>
        <taxon>Mus</taxon>
        <taxon>Mus</taxon>
    </lineage>
</organism>
<accession>O70576</accession>
<accession>B2RSV0</accession>
<dbReference type="EMBL" id="AJ005678">
    <property type="protein sequence ID" value="CAA06669.1"/>
    <property type="molecule type" value="mRNA"/>
</dbReference>
<dbReference type="EMBL" id="BC139010">
    <property type="protein sequence ID" value="AAI39011.1"/>
    <property type="molecule type" value="mRNA"/>
</dbReference>
<dbReference type="EMBL" id="BC139011">
    <property type="protein sequence ID" value="AAI39012.1"/>
    <property type="molecule type" value="mRNA"/>
</dbReference>
<dbReference type="CCDS" id="CCDS39344.1"/>
<dbReference type="PIR" id="T30834">
    <property type="entry name" value="T30834"/>
</dbReference>
<dbReference type="RefSeq" id="NP_058660.2">
    <property type="nucleotide sequence ID" value="NM_016964.3"/>
</dbReference>
<dbReference type="RefSeq" id="XP_006504659.1">
    <property type="nucleotide sequence ID" value="XM_006504596.4"/>
</dbReference>
<dbReference type="RefSeq" id="XP_011239250.1">
    <property type="nucleotide sequence ID" value="XM_011240948.4"/>
</dbReference>
<dbReference type="SMR" id="O70576"/>
<dbReference type="BioGRID" id="206141">
    <property type="interactions" value="9"/>
</dbReference>
<dbReference type="CORUM" id="O70576"/>
<dbReference type="DIP" id="DIP-60731N"/>
<dbReference type="FunCoup" id="O70576">
    <property type="interactions" value="1683"/>
</dbReference>
<dbReference type="IntAct" id="O70576">
    <property type="interactions" value="6"/>
</dbReference>
<dbReference type="MINT" id="O70576"/>
<dbReference type="STRING" id="10090.ENSMUSP00000040945"/>
<dbReference type="GlyGen" id="O70576">
    <property type="glycosylation" value="1 site"/>
</dbReference>
<dbReference type="iPTMnet" id="O70576"/>
<dbReference type="PhosphoSitePlus" id="O70576"/>
<dbReference type="SwissPalm" id="O70576"/>
<dbReference type="PaxDb" id="10090-ENSMUSP00000040945"/>
<dbReference type="PeptideAtlas" id="O70576"/>
<dbReference type="ProteomicsDB" id="258655"/>
<dbReference type="Antibodypedia" id="30623">
    <property type="antibodies" value="158 antibodies from 28 providers"/>
</dbReference>
<dbReference type="DNASU" id="50878"/>
<dbReference type="Ensembl" id="ENSMUST00000048028.15">
    <property type="protein sequence ID" value="ENSMUSP00000040945.9"/>
    <property type="gene ID" value="ENSMUSG00000036928.15"/>
</dbReference>
<dbReference type="Ensembl" id="ENSMUST00000162245.8">
    <property type="protein sequence ID" value="ENSMUSP00000125523.2"/>
    <property type="gene ID" value="ENSMUSG00000036928.15"/>
</dbReference>
<dbReference type="GeneID" id="50878"/>
<dbReference type="KEGG" id="mmu:50878"/>
<dbReference type="UCSC" id="uc009afn.2">
    <property type="organism name" value="mouse"/>
</dbReference>
<dbReference type="AGR" id="MGI:1355311"/>
<dbReference type="CTD" id="10734"/>
<dbReference type="MGI" id="MGI:1355311">
    <property type="gene designation" value="Stag3"/>
</dbReference>
<dbReference type="VEuPathDB" id="HostDB:ENSMUSG00000036928"/>
<dbReference type="eggNOG" id="KOG2011">
    <property type="taxonomic scope" value="Eukaryota"/>
</dbReference>
<dbReference type="GeneTree" id="ENSGT00950000182972"/>
<dbReference type="HOGENOM" id="CLU_005067_1_0_1"/>
<dbReference type="InParanoid" id="O70576"/>
<dbReference type="OMA" id="QHTETHH"/>
<dbReference type="OrthoDB" id="498590at2759"/>
<dbReference type="PhylomeDB" id="O70576"/>
<dbReference type="TreeFam" id="TF314604"/>
<dbReference type="BioGRID-ORCS" id="50878">
    <property type="hits" value="3 hits in 78 CRISPR screens"/>
</dbReference>
<dbReference type="ChiTaRS" id="Stag3">
    <property type="organism name" value="mouse"/>
</dbReference>
<dbReference type="PRO" id="PR:O70576"/>
<dbReference type="Proteomes" id="UP000000589">
    <property type="component" value="Chromosome 5"/>
</dbReference>
<dbReference type="RNAct" id="O70576">
    <property type="molecule type" value="protein"/>
</dbReference>
<dbReference type="Bgee" id="ENSMUSG00000036928">
    <property type="expression patterns" value="Expressed in spermatocyte and 102 other cell types or tissues"/>
</dbReference>
<dbReference type="ExpressionAtlas" id="O70576">
    <property type="expression patterns" value="baseline and differential"/>
</dbReference>
<dbReference type="GO" id="GO:0000775">
    <property type="term" value="C:chromosome, centromeric region"/>
    <property type="evidence" value="ECO:0007669"/>
    <property type="project" value="UniProtKB-SubCell"/>
</dbReference>
<dbReference type="GO" id="GO:0000794">
    <property type="term" value="C:condensed nuclear chromosome"/>
    <property type="evidence" value="ECO:0000314"/>
    <property type="project" value="MGI"/>
</dbReference>
<dbReference type="GO" id="GO:0000800">
    <property type="term" value="C:lateral element"/>
    <property type="evidence" value="ECO:0000314"/>
    <property type="project" value="MGI"/>
</dbReference>
<dbReference type="GO" id="GO:0001673">
    <property type="term" value="C:male germ cell nucleus"/>
    <property type="evidence" value="ECO:0000314"/>
    <property type="project" value="MGI"/>
</dbReference>
<dbReference type="GO" id="GO:0030893">
    <property type="term" value="C:meiotic cohesin complex"/>
    <property type="evidence" value="ECO:0000314"/>
    <property type="project" value="UniProtKB"/>
</dbReference>
<dbReference type="GO" id="GO:0005730">
    <property type="term" value="C:nucleolus"/>
    <property type="evidence" value="ECO:0007669"/>
    <property type="project" value="Ensembl"/>
</dbReference>
<dbReference type="GO" id="GO:0005654">
    <property type="term" value="C:nucleoplasm"/>
    <property type="evidence" value="ECO:0000304"/>
    <property type="project" value="Reactome"/>
</dbReference>
<dbReference type="GO" id="GO:0000795">
    <property type="term" value="C:synaptonemal complex"/>
    <property type="evidence" value="ECO:0000314"/>
    <property type="project" value="MGI"/>
</dbReference>
<dbReference type="GO" id="GO:0000802">
    <property type="term" value="C:transverse filament"/>
    <property type="evidence" value="ECO:0000314"/>
    <property type="project" value="MGI"/>
</dbReference>
<dbReference type="GO" id="GO:0034089">
    <property type="term" value="P:establishment of meiotic sister chromatid cohesion"/>
    <property type="evidence" value="ECO:0000250"/>
    <property type="project" value="UniProtKB"/>
</dbReference>
<dbReference type="GO" id="GO:0007066">
    <property type="term" value="P:female meiosis sister chromatid cohesion"/>
    <property type="evidence" value="ECO:0000250"/>
    <property type="project" value="MGI"/>
</dbReference>
<dbReference type="GO" id="GO:0007129">
    <property type="term" value="P:homologous chromosome pairing at meiosis"/>
    <property type="evidence" value="ECO:0000315"/>
    <property type="project" value="MGI"/>
</dbReference>
<dbReference type="GO" id="GO:0007065">
    <property type="term" value="P:male meiosis sister chromatid cohesion"/>
    <property type="evidence" value="ECO:0000250"/>
    <property type="project" value="MGI"/>
</dbReference>
<dbReference type="GO" id="GO:0034502">
    <property type="term" value="P:protein localization to chromosome"/>
    <property type="evidence" value="ECO:0000315"/>
    <property type="project" value="MGI"/>
</dbReference>
<dbReference type="FunFam" id="1.25.10.10:FF:000449">
    <property type="entry name" value="Cohesin subunit SA-3"/>
    <property type="match status" value="1"/>
</dbReference>
<dbReference type="InterPro" id="IPR016024">
    <property type="entry name" value="ARM-type_fold"/>
</dbReference>
<dbReference type="InterPro" id="IPR039662">
    <property type="entry name" value="Cohesin_Scc3/SA"/>
</dbReference>
<dbReference type="InterPro" id="IPR056396">
    <property type="entry name" value="HEAT_SCC3-SA"/>
</dbReference>
<dbReference type="InterPro" id="IPR020839">
    <property type="entry name" value="SCD"/>
</dbReference>
<dbReference type="InterPro" id="IPR013721">
    <property type="entry name" value="STAG"/>
</dbReference>
<dbReference type="PANTHER" id="PTHR11199:SF8">
    <property type="entry name" value="COHESIN SUBUNIT SA-3"/>
    <property type="match status" value="1"/>
</dbReference>
<dbReference type="PANTHER" id="PTHR11199">
    <property type="entry name" value="STROMAL ANTIGEN"/>
    <property type="match status" value="1"/>
</dbReference>
<dbReference type="Pfam" id="PF24571">
    <property type="entry name" value="HEAT_SCC3-SA"/>
    <property type="match status" value="1"/>
</dbReference>
<dbReference type="Pfam" id="PF21581">
    <property type="entry name" value="SCD"/>
    <property type="match status" value="1"/>
</dbReference>
<dbReference type="Pfam" id="PF08514">
    <property type="entry name" value="STAG"/>
    <property type="match status" value="1"/>
</dbReference>
<dbReference type="SUPFAM" id="SSF48371">
    <property type="entry name" value="ARM repeat"/>
    <property type="match status" value="1"/>
</dbReference>
<dbReference type="PROSITE" id="PS51425">
    <property type="entry name" value="SCD"/>
    <property type="match status" value="1"/>
</dbReference>
<sequence length="1240" mass="141167">MPTLWSPSTQHHGSSSGSESSPLQKSVRRAQMALSPCSSSILPCDDRDSQGTAEWDSPSTNEDSDFEDSLRRNVKKRAAKQPPKAVPAAKHRKKQSRIVSSGNGKNESVPSTNYLFDAVKAARSCMQSLVDEWLDNYKQDENAGFLELINFFIRACGCKSTVTPEMFKTMSNSEIIQHLTEEFNEDSGDYPLTAPGPSWKKFQGSFCEFVKTLVYQCQYSLLYDGFPMDDLISLLIGLSDSQVRAFRHTSTLAAMKLMTSLVKVALQLSLHKDNNQRQYEAERNKGPEQRAPERLESLLEKRKEFQENQEDIEGMMNAIFRGVFVHRYRDILPEIRAICIEEIGYWMQSYSTSFLNDSYLKYIGWTLHDKHKEVRLKCVKALAGLYSNQELSLRMELFTNRFKDRMVSMVMDRECEVAVEAIRLLTLILKNMEGVLTSADCEKIYSIVYISNRAMASSAGEFVYWKIFHPECGAKAVSDRERRRSPQAQKTFIYLLLAFFMESEHHNHAAYLVDSLWDCAGSYLKDWESLTNLLLQKDQNLGDMQERMLIEILVSSARQAAEGHPPVGRITGKKSLTAKERKLQAYDKMKLAEHLIPLLPQLLAKFSADAENVAPLLQLLSYFDLSIYCTQRLEKHLELLLQQLQEVVVKHVEPEVLEAAAHALYLLCKPEFTFFSRVDFARSQLVDFLTDRFQQELDDLMQSSFLDEDEVYSLTATLKRLSAFYNAHDLTRWEISEPCSRLLRKAVDTGEVPHQVILPALTLVYFSILWTVTHISESTSHKQLMSLKKRMVAFCELCQSCLSDVDPEIQEQAFVLLSDLLLIFSPQMIVGGRDFLRPLVFFPEATLQSELASFLMDHVFLQPGELGNGQSQEDHVQIELLHQRRRLLAGFCKLLLYGVLELDAASDVFKHYNKFYEDYGDIIKETLTRARQIDRCQCSRILLLSLKQLYTELIQEQGPQGLTELPAFIEMRDLARRFALSFGPQQLHNRDLVVMLHKEGIKFSLSELPPAGSSHEPPNLAFLELLSEFSPRLFHQDKRLLLSYLEKCLQRVSKAPNHPWGPVTTYCHSLHPLEITAEASPRGPPHSKKRCVEGPCRPQEEESSSQEESLQLNSGPTTPTLTSTAVKRKQSLRTVGKKQKGRPGPGPGPGPELICSQQLLGTQRLKMSSAPCFQIRCDPSGSGLGKQLTRLSLMEEDEEEELRLLDEEWQRGDKMLHSPSSPSEHGLDLLDTTELNMEDF</sequence>
<keyword id="KW-0131">Cell cycle</keyword>
<keyword id="KW-0137">Centromere</keyword>
<keyword id="KW-0158">Chromosome</keyword>
<keyword id="KW-0159">Chromosome partition</keyword>
<keyword id="KW-0469">Meiosis</keyword>
<keyword id="KW-0539">Nucleus</keyword>
<keyword id="KW-0597">Phosphoprotein</keyword>
<keyword id="KW-1185">Reference proteome</keyword>
<proteinExistence type="evidence at protein level"/>
<protein>
    <recommendedName>
        <fullName>Cohesin subunit SA-3</fullName>
    </recommendedName>
    <alternativeName>
        <fullName>SCC3 homolog 3</fullName>
    </alternativeName>
    <alternativeName>
        <fullName>Stromal antigen 3</fullName>
    </alternativeName>
    <alternativeName>
        <fullName>Stromalin-3</fullName>
    </alternativeName>
</protein>
<feature type="chain" id="PRO_0000120189" description="Cohesin subunit SA-3">
    <location>
        <begin position="1"/>
        <end position="1240"/>
    </location>
</feature>
<feature type="domain" description="SCD" evidence="2">
    <location>
        <begin position="324"/>
        <end position="409"/>
    </location>
</feature>
<feature type="region of interest" description="Disordered" evidence="3">
    <location>
        <begin position="1"/>
        <end position="108"/>
    </location>
</feature>
<feature type="region of interest" description="Disordered" evidence="3">
    <location>
        <begin position="1077"/>
        <end position="1154"/>
    </location>
</feature>
<feature type="region of interest" description="Disordered" evidence="3">
    <location>
        <begin position="1213"/>
        <end position="1240"/>
    </location>
</feature>
<feature type="compositionally biased region" description="Low complexity" evidence="3">
    <location>
        <begin position="1"/>
        <end position="25"/>
    </location>
</feature>
<feature type="compositionally biased region" description="Polar residues" evidence="3">
    <location>
        <begin position="97"/>
        <end position="108"/>
    </location>
</feature>
<feature type="compositionally biased region" description="Polar residues" evidence="3">
    <location>
        <begin position="1115"/>
        <end position="1125"/>
    </location>
</feature>
<feature type="compositionally biased region" description="Basic residues" evidence="3">
    <location>
        <begin position="1126"/>
        <end position="1141"/>
    </location>
</feature>
<feature type="modified residue" description="Phosphoserine" evidence="9">
    <location>
        <position position="1218"/>
    </location>
</feature>
<feature type="sequence conflict" description="In Ref. 1; CAA06669." evidence="8" ref="1">
    <original>L</original>
    <variation>P</variation>
    <location>
        <position position="553"/>
    </location>
</feature>
<feature type="sequence conflict" description="In Ref. 1; CAA06669." evidence="8" ref="1">
    <original>A</original>
    <variation>D</variation>
    <location>
        <position position="604"/>
    </location>
</feature>
<feature type="sequence conflict" description="In Ref. 1; CAA06669." evidence="8" ref="1">
    <original>A</original>
    <variation>G</variation>
    <location>
        <position position="1079"/>
    </location>
</feature>
<feature type="sequence conflict" description="In Ref. 1; CAA06669." evidence="8" ref="1">
    <original>R</original>
    <variation>K</variation>
    <location>
        <position position="1090"/>
    </location>
</feature>
<name>STAG3_MOUSE</name>
<evidence type="ECO:0000250" key="1"/>
<evidence type="ECO:0000255" key="2">
    <source>
        <dbReference type="PROSITE-ProRule" id="PRU00750"/>
    </source>
</evidence>
<evidence type="ECO:0000256" key="3">
    <source>
        <dbReference type="SAM" id="MobiDB-lite"/>
    </source>
</evidence>
<evidence type="ECO:0000269" key="4">
    <source>
    </source>
</evidence>
<evidence type="ECO:0000269" key="5">
    <source>
    </source>
</evidence>
<evidence type="ECO:0000269" key="6">
    <source>
    </source>
</evidence>
<evidence type="ECO:0000269" key="7">
    <source>
    </source>
</evidence>
<evidence type="ECO:0000305" key="8"/>
<evidence type="ECO:0007744" key="9">
    <source>
    </source>
</evidence>
<reference key="1">
    <citation type="journal article" date="2000" name="FASEB J.">
        <title>STAG3, a novel gene encoding a protein involved in meiotic chromosome pairing and location of STAG3-related genes flanking the Williams-Beuren syndrome deletion.</title>
        <authorList>
            <person name="Pezzi N."/>
            <person name="Prieto I."/>
            <person name="Kremer L."/>
            <person name="Perez Jurado L.A."/>
            <person name="Valero C."/>
            <person name="Del Mazo J."/>
            <person name="Martinez-A C."/>
            <person name="Barbero J.L."/>
        </authorList>
    </citation>
    <scope>NUCLEOTIDE SEQUENCE [MRNA]</scope>
    <scope>CHARACTERIZATION</scope>
    <source>
        <tissue>Testis</tissue>
    </source>
</reference>
<reference key="2">
    <citation type="journal article" date="2004" name="Genome Res.">
        <title>The status, quality, and expansion of the NIH full-length cDNA project: the Mammalian Gene Collection (MGC).</title>
        <authorList>
            <consortium name="The MGC Project Team"/>
        </authorList>
    </citation>
    <scope>NUCLEOTIDE SEQUENCE [LARGE SCALE MRNA]</scope>
    <source>
        <tissue>Brain</tissue>
    </source>
</reference>
<reference key="3">
    <citation type="journal article" date="2001" name="Nat. Cell Biol.">
        <title>Mammalian STAG3 is a cohesin specific to sister chromatid arms in meiosis I.</title>
        <authorList>
            <person name="Prieto I."/>
            <person name="Suja J.A."/>
            <person name="Pezzi N."/>
            <person name="Kremer L."/>
            <person name="Martinez-A C."/>
            <person name="Rufas J.S."/>
            <person name="Barbero J.L."/>
        </authorList>
    </citation>
    <scope>FUNCTION IN MEIOSIS</scope>
    <scope>INTERACTION WITH SMC1A AND SMC3</scope>
</reference>
<reference key="4">
    <citation type="journal article" date="2010" name="Cell">
        <title>A tissue-specific atlas of mouse protein phosphorylation and expression.</title>
        <authorList>
            <person name="Huttlin E.L."/>
            <person name="Jedrychowski M.P."/>
            <person name="Elias J.E."/>
            <person name="Goswami T."/>
            <person name="Rad R."/>
            <person name="Beausoleil S.A."/>
            <person name="Villen J."/>
            <person name="Haas W."/>
            <person name="Sowa M.E."/>
            <person name="Gygi S.P."/>
        </authorList>
    </citation>
    <scope>PHOSPHORYLATION [LARGE SCALE ANALYSIS] AT SER-1218</scope>
    <scope>IDENTIFICATION BY MASS SPECTROMETRY [LARGE SCALE ANALYSIS]</scope>
    <source>
        <tissue>Testis</tissue>
    </source>
</reference>
<reference key="5">
    <citation type="journal article" date="2012" name="PLoS Genet.">
        <title>Phosphorylation of chromosome core components may serve as axis marks for the status of chromosomal events during mammalian meiosis.</title>
        <authorList>
            <person name="Fukuda T."/>
            <person name="Pratto F."/>
            <person name="Schimenti J.C."/>
            <person name="Turner J.M."/>
            <person name="Camerini-Otero R.D."/>
            <person name="Hoeoeg C."/>
        </authorList>
    </citation>
    <scope>SUBCELLULAR LOCATION</scope>
    <scope>PHOSPHORYLATION</scope>
</reference>
<reference key="6">
    <citation type="journal article" date="2014" name="Nat. Cell Biol.">
        <title>The TRF1-binding protein TERB1 promotes chromosome movement and telomere rigidity in meiosis.</title>
        <authorList>
            <person name="Shibuya H."/>
            <person name="Ishiguro K.I."/>
            <person name="Watanabe Y."/>
        </authorList>
    </citation>
    <scope>INTERACTION WITH CCDC79</scope>
</reference>
<reference key="7">
    <citation type="journal article" date="2014" name="N. Engl. J. Med.">
        <title>Mutant cohesin in premature ovarian failure.</title>
        <authorList>
            <person name="Caburet S."/>
            <person name="Arboleda V.A."/>
            <person name="Llano E."/>
            <person name="Overbeek P.A."/>
            <person name="Barbero J.L."/>
            <person name="Oka K."/>
            <person name="Harrison W."/>
            <person name="Vaiman D."/>
            <person name="Ben-Neriah Z."/>
            <person name="Garcia-Tunon I."/>
            <person name="Fellous M."/>
            <person name="Pendas A.M."/>
            <person name="Veitia R.A."/>
            <person name="Vilain E."/>
        </authorList>
    </citation>
    <scope>DISRUPTION PHENOTYPE</scope>
    <scope>FUNCTION</scope>
</reference>